<proteinExistence type="evidence at protein level"/>
<feature type="signal peptide" evidence="2">
    <location>
        <begin position="1"/>
        <end position="18"/>
    </location>
</feature>
<feature type="chain" id="PRO_0000015367" description="Interleukin-10">
    <location>
        <begin position="19"/>
        <end position="178"/>
    </location>
</feature>
<feature type="glycosylation site" description="N-linked (GlcNAc...) asparagine" evidence="2">
    <location>
        <position position="29"/>
    </location>
</feature>
<feature type="glycosylation site" description="N-linked (GlcNAc...) asparagine" evidence="2">
    <location>
        <position position="134"/>
    </location>
</feature>
<feature type="disulfide bond" evidence="4">
    <location>
        <begin position="30"/>
        <end position="126"/>
    </location>
</feature>
<feature type="disulfide bond" evidence="4">
    <location>
        <begin position="80"/>
        <end position="132"/>
    </location>
</feature>
<feature type="helix" evidence="6">
    <location>
        <begin position="39"/>
        <end position="49"/>
    </location>
</feature>
<feature type="helix" evidence="6">
    <location>
        <begin position="52"/>
        <end position="56"/>
    </location>
</feature>
<feature type="helix" evidence="6">
    <location>
        <begin position="68"/>
        <end position="75"/>
    </location>
</feature>
<feature type="helix" evidence="6">
    <location>
        <begin position="79"/>
        <end position="92"/>
    </location>
</feature>
<feature type="helix" evidence="6">
    <location>
        <begin position="94"/>
        <end position="100"/>
    </location>
</feature>
<feature type="helix" evidence="6">
    <location>
        <begin position="103"/>
        <end position="105"/>
    </location>
</feature>
<feature type="helix" evidence="6">
    <location>
        <begin position="106"/>
        <end position="125"/>
    </location>
</feature>
<feature type="turn" evidence="6">
    <location>
        <begin position="127"/>
        <end position="129"/>
    </location>
</feature>
<feature type="helix" evidence="6">
    <location>
        <begin position="131"/>
        <end position="133"/>
    </location>
</feature>
<feature type="helix" evidence="6">
    <location>
        <begin position="137"/>
        <end position="149"/>
    </location>
</feature>
<feature type="helix" evidence="6">
    <location>
        <begin position="151"/>
        <end position="159"/>
    </location>
</feature>
<feature type="helix" evidence="6">
    <location>
        <begin position="161"/>
        <end position="174"/>
    </location>
</feature>
<gene>
    <name type="primary">Il10</name>
    <name type="synonym">Il-10</name>
</gene>
<protein>
    <recommendedName>
        <fullName>Interleukin-10</fullName>
        <shortName>IL-10</shortName>
    </recommendedName>
    <alternativeName>
        <fullName>Cytokine synthesis inhibitory factor</fullName>
        <shortName>CSIF</shortName>
    </alternativeName>
</protein>
<organism>
    <name type="scientific">Mus musculus</name>
    <name type="common">Mouse</name>
    <dbReference type="NCBI Taxonomy" id="10090"/>
    <lineage>
        <taxon>Eukaryota</taxon>
        <taxon>Metazoa</taxon>
        <taxon>Chordata</taxon>
        <taxon>Craniata</taxon>
        <taxon>Vertebrata</taxon>
        <taxon>Euteleostomi</taxon>
        <taxon>Mammalia</taxon>
        <taxon>Eutheria</taxon>
        <taxon>Euarchontoglires</taxon>
        <taxon>Glires</taxon>
        <taxon>Rodentia</taxon>
        <taxon>Myomorpha</taxon>
        <taxon>Muroidea</taxon>
        <taxon>Muridae</taxon>
        <taxon>Murinae</taxon>
        <taxon>Mus</taxon>
        <taxon>Mus</taxon>
    </lineage>
</organism>
<name>IL10_MOUSE</name>
<reference key="1">
    <citation type="journal article" date="1990" name="Science">
        <title>Homology of cytokine synthesis inhibitory factor (IL-10) to the Epstein-Barr virus gene BCRFI.</title>
        <authorList>
            <person name="Moore K.W."/>
            <person name="Vieira P."/>
            <person name="Fiorentino D.F."/>
            <person name="Trounstine M.L."/>
            <person name="Khan T.A."/>
            <person name="Mosmann T.R."/>
        </authorList>
    </citation>
    <scope>NUCLEOTIDE SEQUENCE [MRNA]</scope>
</reference>
<reference key="2">
    <citation type="journal article" date="1992" name="J. Immunol.">
        <title>Structure of the mouse IL-10 gene and chromosomal localization of the mouse and human genes.</title>
        <authorList>
            <person name="Kim J.M."/>
            <person name="Brannan C.I."/>
            <person name="Copeland N.G."/>
            <person name="Jenkins N.A."/>
            <person name="Khan T.A."/>
            <person name="Moore K.W."/>
        </authorList>
    </citation>
    <scope>NUCLEOTIDE SEQUENCE [GENOMIC DNA]</scope>
</reference>
<reference key="3">
    <citation type="journal article" date="2009" name="PLoS Biol.">
        <title>Lineage-specific biology revealed by a finished genome assembly of the mouse.</title>
        <authorList>
            <person name="Church D.M."/>
            <person name="Goodstadt L."/>
            <person name="Hillier L.W."/>
            <person name="Zody M.C."/>
            <person name="Goldstein S."/>
            <person name="She X."/>
            <person name="Bult C.J."/>
            <person name="Agarwala R."/>
            <person name="Cherry J.L."/>
            <person name="DiCuccio M."/>
            <person name="Hlavina W."/>
            <person name="Kapustin Y."/>
            <person name="Meric P."/>
            <person name="Maglott D."/>
            <person name="Birtle Z."/>
            <person name="Marques A.C."/>
            <person name="Graves T."/>
            <person name="Zhou S."/>
            <person name="Teague B."/>
            <person name="Potamousis K."/>
            <person name="Churas C."/>
            <person name="Place M."/>
            <person name="Herschleb J."/>
            <person name="Runnheim R."/>
            <person name="Forrest D."/>
            <person name="Amos-Landgraf J."/>
            <person name="Schwartz D.C."/>
            <person name="Cheng Z."/>
            <person name="Lindblad-Toh K."/>
            <person name="Eichler E.E."/>
            <person name="Ponting C.P."/>
        </authorList>
    </citation>
    <scope>NUCLEOTIDE SEQUENCE [LARGE SCALE GENOMIC DNA]</scope>
    <source>
        <strain>C57BL/6J</strain>
    </source>
</reference>
<reference key="4">
    <citation type="submission" date="2005-07" db="EMBL/GenBank/DDBJ databases">
        <authorList>
            <person name="Mural R.J."/>
            <person name="Adams M.D."/>
            <person name="Myers E.W."/>
            <person name="Smith H.O."/>
            <person name="Venter J.C."/>
        </authorList>
    </citation>
    <scope>NUCLEOTIDE SEQUENCE [LARGE SCALE GENOMIC DNA]</scope>
</reference>
<reference key="5">
    <citation type="journal article" date="2004" name="Genome Res.">
        <title>The status, quality, and expansion of the NIH full-length cDNA project: the Mammalian Gene Collection (MGC).</title>
        <authorList>
            <consortium name="The MGC Project Team"/>
        </authorList>
    </citation>
    <scope>NUCLEOTIDE SEQUENCE [LARGE SCALE MRNA]</scope>
    <source>
        <tissue>Brain</tissue>
    </source>
</reference>
<reference key="6">
    <citation type="journal article" date="1993" name="Biochemistry">
        <title>Disulfide bond assignments and secondary structure analysis of human and murine interleukin 10.</title>
        <authorList>
            <person name="Windsor W.T."/>
            <person name="Syto R."/>
            <person name="Tsarbopoulos A."/>
            <person name="Zhang R."/>
            <person name="Durkin J."/>
            <person name="Baldwin S."/>
            <person name="Paliwal S."/>
            <person name="Mui P.W."/>
            <person name="Pramanik B."/>
            <person name="Trotta P.P."/>
        </authorList>
    </citation>
    <scope>DISULFIDE BONDS</scope>
</reference>
<reference key="7">
    <citation type="journal article" date="2017" name="Science">
        <title>Anti-inflammatory effect of IL-10 mediated by metabolic reprogramming of macrophages.</title>
        <authorList>
            <person name="Ip W.K.E."/>
            <person name="Hoshi N."/>
            <person name="Shouval D.S."/>
            <person name="Snapper S."/>
            <person name="Medzhitov R."/>
        </authorList>
    </citation>
    <scope>FUNCTION</scope>
</reference>
<dbReference type="EMBL" id="M37897">
    <property type="protein sequence ID" value="AAA39274.1"/>
    <property type="molecule type" value="mRNA"/>
</dbReference>
<dbReference type="EMBL" id="M84340">
    <property type="protein sequence ID" value="AAA39275.1"/>
    <property type="molecule type" value="Genomic_DNA"/>
</dbReference>
<dbReference type="EMBL" id="AL513351">
    <property type="status" value="NOT_ANNOTATED_CDS"/>
    <property type="molecule type" value="Genomic_DNA"/>
</dbReference>
<dbReference type="EMBL" id="CH466520">
    <property type="protein sequence ID" value="EDL39722.1"/>
    <property type="molecule type" value="Genomic_DNA"/>
</dbReference>
<dbReference type="EMBL" id="BC120612">
    <property type="protein sequence ID" value="AAI20613.1"/>
    <property type="molecule type" value="mRNA"/>
</dbReference>
<dbReference type="EMBL" id="BC137844">
    <property type="protein sequence ID" value="AAI37845.1"/>
    <property type="molecule type" value="mRNA"/>
</dbReference>
<dbReference type="CCDS" id="CCDS15265.1"/>
<dbReference type="PIR" id="A34853">
    <property type="entry name" value="A34853"/>
</dbReference>
<dbReference type="RefSeq" id="NP_034678.1">
    <property type="nucleotide sequence ID" value="NM_010548.2"/>
</dbReference>
<dbReference type="PDB" id="4X51">
    <property type="method" value="X-ray"/>
    <property type="resolution" value="2.05 A"/>
    <property type="chains" value="A/B=27-178"/>
</dbReference>
<dbReference type="PDBsum" id="4X51"/>
<dbReference type="BMRB" id="P18893"/>
<dbReference type="SMR" id="P18893"/>
<dbReference type="BioGRID" id="200603">
    <property type="interactions" value="1"/>
</dbReference>
<dbReference type="FunCoup" id="P18893">
    <property type="interactions" value="952"/>
</dbReference>
<dbReference type="STRING" id="10090.ENSMUSP00000016673"/>
<dbReference type="GlyCosmos" id="P18893">
    <property type="glycosylation" value="2 sites, No reported glycans"/>
</dbReference>
<dbReference type="GlyGen" id="P18893">
    <property type="glycosylation" value="4 sites"/>
</dbReference>
<dbReference type="PaxDb" id="10090-ENSMUSP00000016673"/>
<dbReference type="Antibodypedia" id="3407">
    <property type="antibodies" value="1736 antibodies from 50 providers"/>
</dbReference>
<dbReference type="DNASU" id="16153"/>
<dbReference type="Ensembl" id="ENSMUST00000016673.6">
    <property type="protein sequence ID" value="ENSMUSP00000016673.6"/>
    <property type="gene ID" value="ENSMUSG00000016529.6"/>
</dbReference>
<dbReference type="GeneID" id="16153"/>
<dbReference type="KEGG" id="mmu:16153"/>
<dbReference type="UCSC" id="uc007cmu.2">
    <property type="organism name" value="mouse"/>
</dbReference>
<dbReference type="AGR" id="MGI:96537"/>
<dbReference type="CTD" id="3586"/>
<dbReference type="MGI" id="MGI:96537">
    <property type="gene designation" value="Il10"/>
</dbReference>
<dbReference type="VEuPathDB" id="HostDB:ENSMUSG00000016529"/>
<dbReference type="eggNOG" id="ENOG502S22U">
    <property type="taxonomic scope" value="Eukaryota"/>
</dbReference>
<dbReference type="GeneTree" id="ENSGT00950000183124"/>
<dbReference type="HOGENOM" id="CLU_127747_0_0_1"/>
<dbReference type="InParanoid" id="P18893"/>
<dbReference type="OMA" id="CHRFFTC"/>
<dbReference type="OrthoDB" id="9931894at2759"/>
<dbReference type="PhylomeDB" id="P18893"/>
<dbReference type="TreeFam" id="TF333253"/>
<dbReference type="Reactome" id="R-MMU-6783783">
    <property type="pathway name" value="Interleukin-10 signaling"/>
</dbReference>
<dbReference type="BioGRID-ORCS" id="16153">
    <property type="hits" value="0 hits in 80 CRISPR screens"/>
</dbReference>
<dbReference type="ChiTaRS" id="Il10">
    <property type="organism name" value="mouse"/>
</dbReference>
<dbReference type="EvolutionaryTrace" id="P18893"/>
<dbReference type="PRO" id="PR:P18893"/>
<dbReference type="Proteomes" id="UP000000589">
    <property type="component" value="Chromosome 1"/>
</dbReference>
<dbReference type="RNAct" id="P18893">
    <property type="molecule type" value="protein"/>
</dbReference>
<dbReference type="Bgee" id="ENSMUSG00000016529">
    <property type="expression patterns" value="Expressed in epiblast cell in embryo and 20 other cell types or tissues"/>
</dbReference>
<dbReference type="GO" id="GO:0005615">
    <property type="term" value="C:extracellular space"/>
    <property type="evidence" value="ECO:0000314"/>
    <property type="project" value="MGI"/>
</dbReference>
<dbReference type="GO" id="GO:0005125">
    <property type="term" value="F:cytokine activity"/>
    <property type="evidence" value="ECO:0000314"/>
    <property type="project" value="MGI"/>
</dbReference>
<dbReference type="GO" id="GO:0005141">
    <property type="term" value="F:interleukin-10 receptor binding"/>
    <property type="evidence" value="ECO:0007669"/>
    <property type="project" value="Ensembl"/>
</dbReference>
<dbReference type="GO" id="GO:0046983">
    <property type="term" value="F:protein dimerization activity"/>
    <property type="evidence" value="ECO:0007669"/>
    <property type="project" value="Ensembl"/>
</dbReference>
<dbReference type="GO" id="GO:0060670">
    <property type="term" value="P:branching involved in labyrinthine layer morphogenesis"/>
    <property type="evidence" value="ECO:0000315"/>
    <property type="project" value="MGI"/>
</dbReference>
<dbReference type="GO" id="GO:0071392">
    <property type="term" value="P:cellular response to estradiol stimulus"/>
    <property type="evidence" value="ECO:0007669"/>
    <property type="project" value="Ensembl"/>
</dbReference>
<dbReference type="GO" id="GO:0035729">
    <property type="term" value="P:cellular response to hepatocyte growth factor stimulus"/>
    <property type="evidence" value="ECO:0000314"/>
    <property type="project" value="MGI"/>
</dbReference>
<dbReference type="GO" id="GO:0071222">
    <property type="term" value="P:cellular response to lipopolysaccharide"/>
    <property type="evidence" value="ECO:0000314"/>
    <property type="project" value="MGI"/>
</dbReference>
<dbReference type="GO" id="GO:0002439">
    <property type="term" value="P:chronic inflammatory response to antigenic stimulus"/>
    <property type="evidence" value="ECO:0000315"/>
    <property type="project" value="MGI"/>
</dbReference>
<dbReference type="GO" id="GO:0042742">
    <property type="term" value="P:defense response to bacterium"/>
    <property type="evidence" value="ECO:0000314"/>
    <property type="project" value="MGI"/>
</dbReference>
<dbReference type="GO" id="GO:0042832">
    <property type="term" value="P:defense response to protozoan"/>
    <property type="evidence" value="ECO:0000314"/>
    <property type="project" value="MGI"/>
</dbReference>
<dbReference type="GO" id="GO:0140105">
    <property type="term" value="P:interleukin-10-mediated signaling pathway"/>
    <property type="evidence" value="ECO:0007669"/>
    <property type="project" value="Ensembl"/>
</dbReference>
<dbReference type="GO" id="GO:0097421">
    <property type="term" value="P:liver regeneration"/>
    <property type="evidence" value="ECO:0007669"/>
    <property type="project" value="Ensembl"/>
</dbReference>
<dbReference type="GO" id="GO:0010507">
    <property type="term" value="P:negative regulation of autophagy"/>
    <property type="evidence" value="ECO:0007669"/>
    <property type="project" value="Ensembl"/>
</dbReference>
<dbReference type="GO" id="GO:0030889">
    <property type="term" value="P:negative regulation of B cell proliferation"/>
    <property type="evidence" value="ECO:0000266"/>
    <property type="project" value="MGI"/>
</dbReference>
<dbReference type="GO" id="GO:0008285">
    <property type="term" value="P:negative regulation of cell population proliferation"/>
    <property type="evidence" value="ECO:0000315"/>
    <property type="project" value="BHF-UCL"/>
</dbReference>
<dbReference type="GO" id="GO:0002875">
    <property type="term" value="P:negative regulation of chronic inflammatory response to antigenic stimulus"/>
    <property type="evidence" value="ECO:0000315"/>
    <property type="project" value="MGI"/>
</dbReference>
<dbReference type="GO" id="GO:0002719">
    <property type="term" value="P:negative regulation of cytokine production involved in immune response"/>
    <property type="evidence" value="ECO:0007669"/>
    <property type="project" value="Ensembl"/>
</dbReference>
<dbReference type="GO" id="GO:2000352">
    <property type="term" value="P:negative regulation of endothelial cell apoptotic process"/>
    <property type="evidence" value="ECO:0000316"/>
    <property type="project" value="BHF-UCL"/>
</dbReference>
<dbReference type="GO" id="GO:0034115">
    <property type="term" value="P:negative regulation of heterotypic cell-cell adhesion"/>
    <property type="evidence" value="ECO:0000316"/>
    <property type="project" value="BHF-UCL"/>
</dbReference>
<dbReference type="GO" id="GO:0050728">
    <property type="term" value="P:negative regulation of inflammatory response"/>
    <property type="evidence" value="ECO:0000315"/>
    <property type="project" value="MGI"/>
</dbReference>
<dbReference type="GO" id="GO:0032695">
    <property type="term" value="P:negative regulation of interleukin-12 production"/>
    <property type="evidence" value="ECO:0000315"/>
    <property type="project" value="MGI"/>
</dbReference>
<dbReference type="GO" id="GO:0032715">
    <property type="term" value="P:negative regulation of interleukin-6 production"/>
    <property type="evidence" value="ECO:0007669"/>
    <property type="project" value="Ensembl"/>
</dbReference>
<dbReference type="GO" id="GO:0051045">
    <property type="term" value="P:negative regulation of membrane protein ectodomain proteolysis"/>
    <property type="evidence" value="ECO:0007669"/>
    <property type="project" value="Ensembl"/>
</dbReference>
<dbReference type="GO" id="GO:0045347">
    <property type="term" value="P:negative regulation of MHC class II biosynthetic process"/>
    <property type="evidence" value="ECO:0007669"/>
    <property type="project" value="Ensembl"/>
</dbReference>
<dbReference type="GO" id="GO:0030886">
    <property type="term" value="P:negative regulation of myeloid dendritic cell activation"/>
    <property type="evidence" value="ECO:0000315"/>
    <property type="project" value="MGI"/>
</dbReference>
<dbReference type="GO" id="GO:0045019">
    <property type="term" value="P:negative regulation of nitric oxide biosynthetic process"/>
    <property type="evidence" value="ECO:0007669"/>
    <property type="project" value="Ensembl"/>
</dbReference>
<dbReference type="GO" id="GO:1903377">
    <property type="term" value="P:negative regulation of oxidative stress-induced neuron intrinsic apoptotic signaling pathway"/>
    <property type="evidence" value="ECO:0000316"/>
    <property type="project" value="ARUK-UCL"/>
</dbReference>
<dbReference type="GO" id="GO:0032720">
    <property type="term" value="P:negative regulation of tumor necrosis factor production"/>
    <property type="evidence" value="ECO:0000315"/>
    <property type="project" value="MGI"/>
</dbReference>
<dbReference type="GO" id="GO:0032689">
    <property type="term" value="P:negative regulation of type II interferon production"/>
    <property type="evidence" value="ECO:0000315"/>
    <property type="project" value="MGI"/>
</dbReference>
<dbReference type="GO" id="GO:1904706">
    <property type="term" value="P:negative regulation of vascular associated smooth muscle cell proliferation"/>
    <property type="evidence" value="ECO:0000316"/>
    <property type="project" value="BHF-UCL"/>
</dbReference>
<dbReference type="GO" id="GO:0002904">
    <property type="term" value="P:positive regulation of B cell apoptotic process"/>
    <property type="evidence" value="ECO:0000266"/>
    <property type="project" value="MGI"/>
</dbReference>
<dbReference type="GO" id="GO:0045787">
    <property type="term" value="P:positive regulation of cell cycle"/>
    <property type="evidence" value="ECO:0000316"/>
    <property type="project" value="BHF-UCL"/>
</dbReference>
<dbReference type="GO" id="GO:0001819">
    <property type="term" value="P:positive regulation of cytokine production"/>
    <property type="evidence" value="ECO:0007669"/>
    <property type="project" value="Ensembl"/>
</dbReference>
<dbReference type="GO" id="GO:0001938">
    <property type="term" value="P:positive regulation of endothelial cell proliferation"/>
    <property type="evidence" value="ECO:0000316"/>
    <property type="project" value="BHF-UCL"/>
</dbReference>
<dbReference type="GO" id="GO:0002639">
    <property type="term" value="P:positive regulation of immunoglobulin production"/>
    <property type="evidence" value="ECO:0007669"/>
    <property type="project" value="Ensembl"/>
</dbReference>
<dbReference type="GO" id="GO:0043032">
    <property type="term" value="P:positive regulation of macrophage activation"/>
    <property type="evidence" value="ECO:0007669"/>
    <property type="project" value="Ensembl"/>
</dbReference>
<dbReference type="GO" id="GO:0045348">
    <property type="term" value="P:positive regulation of MHC class II biosynthetic process"/>
    <property type="evidence" value="ECO:0000314"/>
    <property type="project" value="MGI"/>
</dbReference>
<dbReference type="GO" id="GO:1902895">
    <property type="term" value="P:positive regulation of miRNA transcription"/>
    <property type="evidence" value="ECO:0007669"/>
    <property type="project" value="Ensembl"/>
</dbReference>
<dbReference type="GO" id="GO:1900100">
    <property type="term" value="P:positive regulation of plasma cell differentiation"/>
    <property type="evidence" value="ECO:0007669"/>
    <property type="project" value="Ensembl"/>
</dbReference>
<dbReference type="GO" id="GO:0046427">
    <property type="term" value="P:positive regulation of receptor signaling pathway via JAK-STAT"/>
    <property type="evidence" value="ECO:0007669"/>
    <property type="project" value="Ensembl"/>
</dbReference>
<dbReference type="GO" id="GO:1903672">
    <property type="term" value="P:positive regulation of sprouting angiogenesis"/>
    <property type="evidence" value="ECO:0000315"/>
    <property type="project" value="BHF-UCL"/>
</dbReference>
<dbReference type="GO" id="GO:0045944">
    <property type="term" value="P:positive regulation of transcription by RNA polymerase II"/>
    <property type="evidence" value="ECO:0000314"/>
    <property type="project" value="BHF-UCL"/>
</dbReference>
<dbReference type="GO" id="GO:0010468">
    <property type="term" value="P:regulation of gene expression"/>
    <property type="evidence" value="ECO:0000266"/>
    <property type="project" value="MGI"/>
</dbReference>
<dbReference type="GO" id="GO:1903034">
    <property type="term" value="P:regulation of response to wounding"/>
    <property type="evidence" value="ECO:0000315"/>
    <property type="project" value="BHF-UCL"/>
</dbReference>
<dbReference type="GO" id="GO:0050807">
    <property type="term" value="P:regulation of synapse organization"/>
    <property type="evidence" value="ECO:0007669"/>
    <property type="project" value="Ensembl"/>
</dbReference>
<dbReference type="GO" id="GO:0014823">
    <property type="term" value="P:response to activity"/>
    <property type="evidence" value="ECO:0007669"/>
    <property type="project" value="Ensembl"/>
</dbReference>
<dbReference type="GO" id="GO:0034465">
    <property type="term" value="P:response to carbon monoxide"/>
    <property type="evidence" value="ECO:0007669"/>
    <property type="project" value="Ensembl"/>
</dbReference>
<dbReference type="GO" id="GO:0051384">
    <property type="term" value="P:response to glucocorticoid"/>
    <property type="evidence" value="ECO:0007669"/>
    <property type="project" value="Ensembl"/>
</dbReference>
<dbReference type="GO" id="GO:0014854">
    <property type="term" value="P:response to inactivity"/>
    <property type="evidence" value="ECO:0007669"/>
    <property type="project" value="Ensembl"/>
</dbReference>
<dbReference type="GO" id="GO:0032868">
    <property type="term" value="P:response to insulin"/>
    <property type="evidence" value="ECO:0007669"/>
    <property type="project" value="Ensembl"/>
</dbReference>
<dbReference type="GO" id="GO:0009410">
    <property type="term" value="P:response to xenobiotic stimulus"/>
    <property type="evidence" value="ECO:0007669"/>
    <property type="project" value="Ensembl"/>
</dbReference>
<dbReference type="FunFam" id="1.20.1250.10:FF:000011">
    <property type="entry name" value="Interleukin-10"/>
    <property type="match status" value="1"/>
</dbReference>
<dbReference type="Gene3D" id="1.20.1250.10">
    <property type="match status" value="1"/>
</dbReference>
<dbReference type="InterPro" id="IPR009079">
    <property type="entry name" value="4_helix_cytokine-like_core"/>
</dbReference>
<dbReference type="InterPro" id="IPR000098">
    <property type="entry name" value="IL-10"/>
</dbReference>
<dbReference type="InterPro" id="IPR020443">
    <property type="entry name" value="IL-10/19/20/24/26"/>
</dbReference>
<dbReference type="InterPro" id="IPR020423">
    <property type="entry name" value="IL-10_CS"/>
</dbReference>
<dbReference type="PANTHER" id="PTHR48482:SF5">
    <property type="entry name" value="INTERLEUKIN-10"/>
    <property type="match status" value="1"/>
</dbReference>
<dbReference type="PANTHER" id="PTHR48482">
    <property type="entry name" value="INTERLEUKIN-19-RELATED"/>
    <property type="match status" value="1"/>
</dbReference>
<dbReference type="Pfam" id="PF00726">
    <property type="entry name" value="IL10"/>
    <property type="match status" value="1"/>
</dbReference>
<dbReference type="PRINTS" id="PR01294">
    <property type="entry name" value="INTRLEUKIN10"/>
</dbReference>
<dbReference type="SMART" id="SM00188">
    <property type="entry name" value="IL10"/>
    <property type="match status" value="1"/>
</dbReference>
<dbReference type="SUPFAM" id="SSF47266">
    <property type="entry name" value="4-helical cytokines"/>
    <property type="match status" value="1"/>
</dbReference>
<dbReference type="PROSITE" id="PS00520">
    <property type="entry name" value="INTERLEUKIN_10"/>
    <property type="match status" value="1"/>
</dbReference>
<sequence>MPGSALLCCLLLLTGMRISRGQYSREDNNCTHFPVGQSHMLLELRTAFSQVKTFFQTKDQLDNILLTDSLMQDFKGYLGCQALSEMIQFYLVEVMPQAEKHGPEIKEHLNSLGEKLKTLRMRLRRCHRFLPCENKSKAVEQVKSDFNKLQDQGVYKAMNEFDIFINCIEAYMMIKMKS</sequence>
<evidence type="ECO:0000250" key="1">
    <source>
        <dbReference type="UniProtKB" id="P22301"/>
    </source>
</evidence>
<evidence type="ECO:0000255" key="2"/>
<evidence type="ECO:0000269" key="3">
    <source>
    </source>
</evidence>
<evidence type="ECO:0000269" key="4">
    <source>
    </source>
</evidence>
<evidence type="ECO:0000305" key="5"/>
<evidence type="ECO:0007829" key="6">
    <source>
        <dbReference type="PDB" id="4X51"/>
    </source>
</evidence>
<accession>P18893</accession>
<accession>Q0VBJ1</accession>
<comment type="function">
    <text evidence="1 3">Major immune regulatory cytokine that acts on many cells of the immune system where it has profound anti-inflammatory functions, limiting excessive tissue disruption caused by inflammation. Mechanistically, IL10 binds to its heterotetrameric receptor comprising IL10RA and IL10RB leading to JAK1 and STAT2-mediated phosphorylation of STAT3. In turn, STAT3 translocates to the nucleus where it drives expression of anti-inflammatory mediators. Targets antigen-presenting cells (APCs) such as macrophages and monocytes and inhibits their release of pro-inflammatory cytokines including granulocyte-macrophage colony-stimulating factor /GM-CSF, granulocyte colony-stimulating factor/G-CSF, IL-1 alpha, IL-1 beta, IL-6, IL-8 and TNF-alpha. Also interferes with antigen presentation by reducing the expression of MHC-class II and co-stimulatory molecules, thereby inhibiting their ability to induce T cell activation (By similarity). In addition, controls the inflammatory response of macrophages by reprogramming essential metabolic pathways including mTOR signaling (By similarity) (PubMed:28473584).</text>
</comment>
<comment type="subunit">
    <text evidence="1">Homodimer. Interacts with IL10RA and IL10RB.</text>
</comment>
<comment type="subcellular location">
    <subcellularLocation>
        <location evidence="1">Secreted</location>
    </subcellularLocation>
</comment>
<comment type="similarity">
    <text evidence="5">Belongs to the IL-10 family.</text>
</comment>
<keyword id="KW-0002">3D-structure</keyword>
<keyword id="KW-0202">Cytokine</keyword>
<keyword id="KW-1015">Disulfide bond</keyword>
<keyword id="KW-0325">Glycoprotein</keyword>
<keyword id="KW-1185">Reference proteome</keyword>
<keyword id="KW-0964">Secreted</keyword>
<keyword id="KW-0732">Signal</keyword>